<name>RS9_NITHX</name>
<proteinExistence type="inferred from homology"/>
<sequence>MSDTMQSLDQLSALKTAESEAPKHTKKIDKYGRAYATGKRKDAVARVWIKPGAGKILVNAREVEVYFARPVLRMMIQQPLVAAARAGQYDVVCTVAGGGLSGQAGAVRHGLSKALTNFEPELRGVLKKGGFLTRDSRVVERKKYGKAKARRSFQFSKR</sequence>
<organism>
    <name type="scientific">Nitrobacter hamburgensis (strain DSM 10229 / NCIMB 13809 / X14)</name>
    <dbReference type="NCBI Taxonomy" id="323097"/>
    <lineage>
        <taxon>Bacteria</taxon>
        <taxon>Pseudomonadati</taxon>
        <taxon>Pseudomonadota</taxon>
        <taxon>Alphaproteobacteria</taxon>
        <taxon>Hyphomicrobiales</taxon>
        <taxon>Nitrobacteraceae</taxon>
        <taxon>Nitrobacter</taxon>
    </lineage>
</organism>
<gene>
    <name evidence="1" type="primary">rpsI</name>
    <name type="ordered locus">Nham_2454</name>
</gene>
<comment type="similarity">
    <text evidence="1">Belongs to the universal ribosomal protein uS9 family.</text>
</comment>
<reference key="1">
    <citation type="submission" date="2006-03" db="EMBL/GenBank/DDBJ databases">
        <title>Complete sequence of chromosome of Nitrobacter hamburgensis X14.</title>
        <authorList>
            <consortium name="US DOE Joint Genome Institute"/>
            <person name="Copeland A."/>
            <person name="Lucas S."/>
            <person name="Lapidus A."/>
            <person name="Barry K."/>
            <person name="Detter J.C."/>
            <person name="Glavina del Rio T."/>
            <person name="Hammon N."/>
            <person name="Israni S."/>
            <person name="Dalin E."/>
            <person name="Tice H."/>
            <person name="Pitluck S."/>
            <person name="Chain P."/>
            <person name="Malfatti S."/>
            <person name="Shin M."/>
            <person name="Vergez L."/>
            <person name="Schmutz J."/>
            <person name="Larimer F."/>
            <person name="Land M."/>
            <person name="Hauser L."/>
            <person name="Kyrpides N."/>
            <person name="Ivanova N."/>
            <person name="Ward B."/>
            <person name="Arp D."/>
            <person name="Klotz M."/>
            <person name="Stein L."/>
            <person name="O'Mullan G."/>
            <person name="Starkenburg S."/>
            <person name="Sayavedra L."/>
            <person name="Poret-Peterson A.T."/>
            <person name="Gentry M.E."/>
            <person name="Bruce D."/>
            <person name="Richardson P."/>
        </authorList>
    </citation>
    <scope>NUCLEOTIDE SEQUENCE [LARGE SCALE GENOMIC DNA]</scope>
    <source>
        <strain>DSM 10229 / NCIMB 13809 / X14</strain>
    </source>
</reference>
<keyword id="KW-1185">Reference proteome</keyword>
<keyword id="KW-0687">Ribonucleoprotein</keyword>
<keyword id="KW-0689">Ribosomal protein</keyword>
<dbReference type="EMBL" id="CP000319">
    <property type="protein sequence ID" value="ABE63244.1"/>
    <property type="molecule type" value="Genomic_DNA"/>
</dbReference>
<dbReference type="RefSeq" id="WP_011510914.1">
    <property type="nucleotide sequence ID" value="NC_007964.1"/>
</dbReference>
<dbReference type="SMR" id="Q1QKK3"/>
<dbReference type="STRING" id="323097.Nham_2454"/>
<dbReference type="KEGG" id="nha:Nham_2454"/>
<dbReference type="eggNOG" id="COG0103">
    <property type="taxonomic scope" value="Bacteria"/>
</dbReference>
<dbReference type="HOGENOM" id="CLU_046483_2_0_5"/>
<dbReference type="OrthoDB" id="9803965at2"/>
<dbReference type="Proteomes" id="UP000001953">
    <property type="component" value="Chromosome"/>
</dbReference>
<dbReference type="GO" id="GO:0022627">
    <property type="term" value="C:cytosolic small ribosomal subunit"/>
    <property type="evidence" value="ECO:0007669"/>
    <property type="project" value="TreeGrafter"/>
</dbReference>
<dbReference type="GO" id="GO:0003723">
    <property type="term" value="F:RNA binding"/>
    <property type="evidence" value="ECO:0007669"/>
    <property type="project" value="TreeGrafter"/>
</dbReference>
<dbReference type="GO" id="GO:0003735">
    <property type="term" value="F:structural constituent of ribosome"/>
    <property type="evidence" value="ECO:0007669"/>
    <property type="project" value="InterPro"/>
</dbReference>
<dbReference type="GO" id="GO:0006412">
    <property type="term" value="P:translation"/>
    <property type="evidence" value="ECO:0007669"/>
    <property type="project" value="UniProtKB-UniRule"/>
</dbReference>
<dbReference type="FunFam" id="3.30.230.10:FF:000034">
    <property type="entry name" value="30S ribosomal protein S9"/>
    <property type="match status" value="1"/>
</dbReference>
<dbReference type="Gene3D" id="3.30.230.10">
    <property type="match status" value="1"/>
</dbReference>
<dbReference type="HAMAP" id="MF_00532_B">
    <property type="entry name" value="Ribosomal_uS9_B"/>
    <property type="match status" value="1"/>
</dbReference>
<dbReference type="InterPro" id="IPR020568">
    <property type="entry name" value="Ribosomal_Su5_D2-typ_SF"/>
</dbReference>
<dbReference type="InterPro" id="IPR000754">
    <property type="entry name" value="Ribosomal_uS9"/>
</dbReference>
<dbReference type="InterPro" id="IPR023035">
    <property type="entry name" value="Ribosomal_uS9_bac/plastid"/>
</dbReference>
<dbReference type="InterPro" id="IPR020574">
    <property type="entry name" value="Ribosomal_uS9_CS"/>
</dbReference>
<dbReference type="InterPro" id="IPR014721">
    <property type="entry name" value="Ribsml_uS5_D2-typ_fold_subgr"/>
</dbReference>
<dbReference type="NCBIfam" id="NF001099">
    <property type="entry name" value="PRK00132.1"/>
    <property type="match status" value="1"/>
</dbReference>
<dbReference type="PANTHER" id="PTHR21569">
    <property type="entry name" value="RIBOSOMAL PROTEIN S9"/>
    <property type="match status" value="1"/>
</dbReference>
<dbReference type="PANTHER" id="PTHR21569:SF1">
    <property type="entry name" value="SMALL RIBOSOMAL SUBUNIT PROTEIN US9M"/>
    <property type="match status" value="1"/>
</dbReference>
<dbReference type="Pfam" id="PF00380">
    <property type="entry name" value="Ribosomal_S9"/>
    <property type="match status" value="1"/>
</dbReference>
<dbReference type="SUPFAM" id="SSF54211">
    <property type="entry name" value="Ribosomal protein S5 domain 2-like"/>
    <property type="match status" value="1"/>
</dbReference>
<dbReference type="PROSITE" id="PS00360">
    <property type="entry name" value="RIBOSOMAL_S9"/>
    <property type="match status" value="1"/>
</dbReference>
<protein>
    <recommendedName>
        <fullName evidence="1">Small ribosomal subunit protein uS9</fullName>
    </recommendedName>
    <alternativeName>
        <fullName evidence="2">30S ribosomal protein S9</fullName>
    </alternativeName>
</protein>
<accession>Q1QKK3</accession>
<evidence type="ECO:0000255" key="1">
    <source>
        <dbReference type="HAMAP-Rule" id="MF_00532"/>
    </source>
</evidence>
<evidence type="ECO:0000305" key="2"/>
<feature type="chain" id="PRO_1000051268" description="Small ribosomal subunit protein uS9">
    <location>
        <begin position="1"/>
        <end position="158"/>
    </location>
</feature>